<proteinExistence type="inferred from homology"/>
<accession>Q2YX06</accession>
<dbReference type="EC" id="3.4.21.-"/>
<dbReference type="EMBL" id="AJ938182">
    <property type="protein sequence ID" value="CAI80576.1"/>
    <property type="molecule type" value="Genomic_DNA"/>
</dbReference>
<dbReference type="SMR" id="Q2YX06"/>
<dbReference type="KEGG" id="sab:SAB0888"/>
<dbReference type="HOGENOM" id="CLU_027421_0_0_9"/>
<dbReference type="GO" id="GO:0005886">
    <property type="term" value="C:plasma membrane"/>
    <property type="evidence" value="ECO:0007669"/>
    <property type="project" value="UniProtKB-SubCell"/>
</dbReference>
<dbReference type="GO" id="GO:0004252">
    <property type="term" value="F:serine-type endopeptidase activity"/>
    <property type="evidence" value="ECO:0007669"/>
    <property type="project" value="InterPro"/>
</dbReference>
<dbReference type="GO" id="GO:0006508">
    <property type="term" value="P:proteolysis"/>
    <property type="evidence" value="ECO:0007669"/>
    <property type="project" value="UniProtKB-KW"/>
</dbReference>
<dbReference type="CDD" id="cd06781">
    <property type="entry name" value="cpPDZ_BsHtra-like"/>
    <property type="match status" value="1"/>
</dbReference>
<dbReference type="Gene3D" id="2.30.42.10">
    <property type="match status" value="1"/>
</dbReference>
<dbReference type="Gene3D" id="2.40.10.10">
    <property type="entry name" value="Trypsin-like serine proteases"/>
    <property type="match status" value="2"/>
</dbReference>
<dbReference type="InterPro" id="IPR051201">
    <property type="entry name" value="Chloro_Bact_Ser_Proteases"/>
</dbReference>
<dbReference type="InterPro" id="IPR001478">
    <property type="entry name" value="PDZ"/>
</dbReference>
<dbReference type="InterPro" id="IPR036034">
    <property type="entry name" value="PDZ_sf"/>
</dbReference>
<dbReference type="InterPro" id="IPR009003">
    <property type="entry name" value="Peptidase_S1_PA"/>
</dbReference>
<dbReference type="InterPro" id="IPR043504">
    <property type="entry name" value="Peptidase_S1_PA_chymotrypsin"/>
</dbReference>
<dbReference type="InterPro" id="IPR001940">
    <property type="entry name" value="Peptidase_S1C"/>
</dbReference>
<dbReference type="PANTHER" id="PTHR43343">
    <property type="entry name" value="PEPTIDASE S12"/>
    <property type="match status" value="1"/>
</dbReference>
<dbReference type="PANTHER" id="PTHR43343:SF3">
    <property type="entry name" value="PROTEASE DO-LIKE 8, CHLOROPLASTIC"/>
    <property type="match status" value="1"/>
</dbReference>
<dbReference type="Pfam" id="PF13180">
    <property type="entry name" value="PDZ_2"/>
    <property type="match status" value="1"/>
</dbReference>
<dbReference type="Pfam" id="PF13365">
    <property type="entry name" value="Trypsin_2"/>
    <property type="match status" value="1"/>
</dbReference>
<dbReference type="PRINTS" id="PR00834">
    <property type="entry name" value="PROTEASES2C"/>
</dbReference>
<dbReference type="SMART" id="SM00228">
    <property type="entry name" value="PDZ"/>
    <property type="match status" value="1"/>
</dbReference>
<dbReference type="SUPFAM" id="SSF50156">
    <property type="entry name" value="PDZ domain-like"/>
    <property type="match status" value="1"/>
</dbReference>
<dbReference type="SUPFAM" id="SSF50494">
    <property type="entry name" value="Trypsin-like serine proteases"/>
    <property type="match status" value="1"/>
</dbReference>
<feature type="chain" id="PRO_0000252464" description="Serine protease HtrA-like">
    <location>
        <begin position="1"/>
        <end position="769"/>
    </location>
</feature>
<feature type="transmembrane region" description="Helical" evidence="1">
    <location>
        <begin position="410"/>
        <end position="430"/>
    </location>
</feature>
<feature type="domain" description="PDZ">
    <location>
        <begin position="680"/>
        <end position="733"/>
    </location>
</feature>
<feature type="region of interest" description="Disordered" evidence="2">
    <location>
        <begin position="1"/>
        <end position="390"/>
    </location>
</feature>
<feature type="compositionally biased region" description="Basic residues" evidence="2">
    <location>
        <begin position="1"/>
        <end position="20"/>
    </location>
</feature>
<feature type="compositionally biased region" description="Basic and acidic residues" evidence="2">
    <location>
        <begin position="21"/>
        <end position="64"/>
    </location>
</feature>
<feature type="compositionally biased region" description="Basic and acidic residues" evidence="2">
    <location>
        <begin position="71"/>
        <end position="108"/>
    </location>
</feature>
<feature type="compositionally biased region" description="Polar residues" evidence="2">
    <location>
        <begin position="126"/>
        <end position="137"/>
    </location>
</feature>
<feature type="compositionally biased region" description="Basic and acidic residues" evidence="2">
    <location>
        <begin position="138"/>
        <end position="186"/>
    </location>
</feature>
<feature type="compositionally biased region" description="Polar residues" evidence="2">
    <location>
        <begin position="202"/>
        <end position="221"/>
    </location>
</feature>
<feature type="compositionally biased region" description="Polar residues" evidence="2">
    <location>
        <begin position="247"/>
        <end position="262"/>
    </location>
</feature>
<feature type="compositionally biased region" description="Basic and acidic residues" evidence="2">
    <location>
        <begin position="264"/>
        <end position="295"/>
    </location>
</feature>
<feature type="compositionally biased region" description="Polar residues" evidence="2">
    <location>
        <begin position="298"/>
        <end position="308"/>
    </location>
</feature>
<feature type="compositionally biased region" description="Basic and acidic residues" evidence="2">
    <location>
        <begin position="310"/>
        <end position="330"/>
    </location>
</feature>
<feature type="compositionally biased region" description="Polar residues" evidence="2">
    <location>
        <begin position="331"/>
        <end position="347"/>
    </location>
</feature>
<feature type="compositionally biased region" description="Basic and acidic residues" evidence="2">
    <location>
        <begin position="348"/>
        <end position="362"/>
    </location>
</feature>
<feature type="compositionally biased region" description="Polar residues" evidence="2">
    <location>
        <begin position="366"/>
        <end position="390"/>
    </location>
</feature>
<feature type="active site" description="Charge relay system" evidence="1">
    <location>
        <position position="504"/>
    </location>
</feature>
<feature type="active site" description="Charge relay system" evidence="1">
    <location>
        <position position="534"/>
    </location>
</feature>
<feature type="active site" description="Charge relay system" evidence="1">
    <location>
        <position position="619"/>
    </location>
</feature>
<keyword id="KW-1003">Cell membrane</keyword>
<keyword id="KW-0378">Hydrolase</keyword>
<keyword id="KW-0472">Membrane</keyword>
<keyword id="KW-0645">Protease</keyword>
<keyword id="KW-0720">Serine protease</keyword>
<keyword id="KW-0812">Transmembrane</keyword>
<keyword id="KW-1133">Transmembrane helix</keyword>
<protein>
    <recommendedName>
        <fullName>Serine protease HtrA-like</fullName>
        <ecNumber>3.4.21.-</ecNumber>
    </recommendedName>
</protein>
<gene>
    <name type="ordered locus">SAB0888</name>
</gene>
<sequence length="769" mass="86626">MDIGKKHVIPKSQYRRKRREFFHNEDREENLNQHQDKQNIDNTTLKKAEKQIHKDSIDKHERFKNSLSSHLEQRNRDVNENKAEESKSNQDSKSAYNRDHYLTDDVSKKQNSLDSVDQDTEKSKYYEQNSEATLSTKSTDKVESSDMRKLSPDKNKVGHEEQHVLSKPSEHDKETRIDFESSRTDSDSSMQTEKIKKDSSDGNESSNLKSEVISDKSNTVPKLSESDDEVNNQKPLTLPEEQKLKRQQSQNEQTKTYTYGDSEQNDKSNHENDLSHHTPSKSDDKDNVMREDHIVDNNPDNDINTPSLSKIDDDRKLDEKIHVEDKHKQNADSSETVGYQSQSSVSHRSTEKRNMAINDHHKLNGQKLNTKTSANNNQKKATSKLNKGRATNNNYSDILKKFWMMYWPKLVILMGIIILIVILNAIFNNVNKNDRMNDNNDADAQKYTTTMKNANNTVKSVVTVENETSKDSSLPKDKASQDEVGSGVVYKKSGDTLYIVTNAHVVGDKENQKITFSNNKSVVGKVLGKDKWSDLAVVKATSSDSSVKEIAIGDSNNLVLGEPILVVGNPLGVDFKGTVTEGIISGLNRNVLIDFDKDNKYDMLMKAFQIDASVNPGNSGGAVVNREGKLIGVVAAKISMPNVENMSFAIPVNEVQKIVKDLETKGKIDYPDVGVKMKNIASLNSFERQAVKLPGKVKNGVVVDQVDNNGLADQSSLKKGDVITELDGKLLEDDLRFRQIIFSHKDDLKSITAKIYRDGKEKEINIKLK</sequence>
<organism>
    <name type="scientific">Staphylococcus aureus (strain bovine RF122 / ET3-1)</name>
    <dbReference type="NCBI Taxonomy" id="273036"/>
    <lineage>
        <taxon>Bacteria</taxon>
        <taxon>Bacillati</taxon>
        <taxon>Bacillota</taxon>
        <taxon>Bacilli</taxon>
        <taxon>Bacillales</taxon>
        <taxon>Staphylococcaceae</taxon>
        <taxon>Staphylococcus</taxon>
    </lineage>
</organism>
<reference key="1">
    <citation type="journal article" date="2007" name="PLoS ONE">
        <title>Molecular correlates of host specialization in Staphylococcus aureus.</title>
        <authorList>
            <person name="Herron-Olson L."/>
            <person name="Fitzgerald J.R."/>
            <person name="Musser J.M."/>
            <person name="Kapur V."/>
        </authorList>
    </citation>
    <scope>NUCLEOTIDE SEQUENCE [LARGE SCALE GENOMIC DNA]</scope>
    <source>
        <strain>bovine RF122 / ET3-1</strain>
    </source>
</reference>
<evidence type="ECO:0000255" key="1"/>
<evidence type="ECO:0000256" key="2">
    <source>
        <dbReference type="SAM" id="MobiDB-lite"/>
    </source>
</evidence>
<evidence type="ECO:0000305" key="3"/>
<name>HTRAL_STAAB</name>
<comment type="subcellular location">
    <subcellularLocation>
        <location evidence="3">Cell membrane</location>
        <topology evidence="3">Single-pass membrane protein</topology>
    </subcellularLocation>
</comment>
<comment type="similarity">
    <text evidence="3">Belongs to the peptidase S1C family.</text>
</comment>